<name>YMGF_ECOLI</name>
<gene>
    <name type="primary">ymgF</name>
    <name type="ordered locus">b4520</name>
    <name type="ordered locus">JW1156</name>
</gene>
<proteinExistence type="evidence at protein level"/>
<dbReference type="EMBL" id="U00096">
    <property type="protein sequence ID" value="ABD18651.1"/>
    <property type="molecule type" value="Genomic_DNA"/>
</dbReference>
<dbReference type="EMBL" id="AP009048">
    <property type="protein sequence ID" value="BAE76388.1"/>
    <property type="molecule type" value="Genomic_DNA"/>
</dbReference>
<dbReference type="RefSeq" id="WP_001065861.1">
    <property type="nucleotide sequence ID" value="NZ_SSZK01000010.1"/>
</dbReference>
<dbReference type="RefSeq" id="YP_588447.1">
    <property type="nucleotide sequence ID" value="NC_000913.3"/>
</dbReference>
<dbReference type="SMR" id="P58034"/>
<dbReference type="BioGRID" id="4260889">
    <property type="interactions" value="297"/>
</dbReference>
<dbReference type="DIP" id="DIP-12735N"/>
<dbReference type="FunCoup" id="P58034">
    <property type="interactions" value="12"/>
</dbReference>
<dbReference type="IntAct" id="P58034">
    <property type="interactions" value="9"/>
</dbReference>
<dbReference type="STRING" id="511145.b4520"/>
<dbReference type="PaxDb" id="511145-b4520"/>
<dbReference type="EnsemblBacteria" id="ABD18651">
    <property type="protein sequence ID" value="ABD18651"/>
    <property type="gene ID" value="b4520"/>
</dbReference>
<dbReference type="GeneID" id="1450253"/>
<dbReference type="GeneID" id="75203732"/>
<dbReference type="KEGG" id="ecj:JW1156"/>
<dbReference type="KEGG" id="eco:b4520"/>
<dbReference type="KEGG" id="ecoc:C3026_06885"/>
<dbReference type="PATRIC" id="fig|1411691.4.peg.1122"/>
<dbReference type="HOGENOM" id="CLU_2716293_0_0_6"/>
<dbReference type="InParanoid" id="P58034"/>
<dbReference type="OMA" id="FINAVMW"/>
<dbReference type="OrthoDB" id="6572651at2"/>
<dbReference type="BioCyc" id="EcoCyc:MONOMER0-2141"/>
<dbReference type="PRO" id="PR:P58034"/>
<dbReference type="Proteomes" id="UP000000625">
    <property type="component" value="Chromosome"/>
</dbReference>
<dbReference type="GO" id="GO:0000935">
    <property type="term" value="C:division septum"/>
    <property type="evidence" value="ECO:0000314"/>
    <property type="project" value="EcoCyc"/>
</dbReference>
<dbReference type="GO" id="GO:0005886">
    <property type="term" value="C:plasma membrane"/>
    <property type="evidence" value="ECO:0000314"/>
    <property type="project" value="EcoCyc"/>
</dbReference>
<dbReference type="GO" id="GO:0051301">
    <property type="term" value="P:cell division"/>
    <property type="evidence" value="ECO:0000316"/>
    <property type="project" value="EcoCyc"/>
</dbReference>
<dbReference type="InterPro" id="IPR048171">
    <property type="entry name" value="YmgF"/>
</dbReference>
<dbReference type="NCBIfam" id="NF041587">
    <property type="entry name" value="YmgF"/>
    <property type="match status" value="1"/>
</dbReference>
<keyword id="KW-0131">Cell cycle</keyword>
<keyword id="KW-0132">Cell division</keyword>
<keyword id="KW-0997">Cell inner membrane</keyword>
<keyword id="KW-1003">Cell membrane</keyword>
<keyword id="KW-0472">Membrane</keyword>
<keyword id="KW-1185">Reference proteome</keyword>
<keyword id="KW-0812">Transmembrane</keyword>
<keyword id="KW-1133">Transmembrane helix</keyword>
<reference key="1">
    <citation type="journal article" date="1997" name="Science">
        <title>The complete genome sequence of Escherichia coli K-12.</title>
        <authorList>
            <person name="Blattner F.R."/>
            <person name="Plunkett G. III"/>
            <person name="Bloch C.A."/>
            <person name="Perna N.T."/>
            <person name="Burland V."/>
            <person name="Riley M."/>
            <person name="Collado-Vides J."/>
            <person name="Glasner J.D."/>
            <person name="Rode C.K."/>
            <person name="Mayhew G.F."/>
            <person name="Gregor J."/>
            <person name="Davis N.W."/>
            <person name="Kirkpatrick H.A."/>
            <person name="Goeden M.A."/>
            <person name="Rose D.J."/>
            <person name="Mau B."/>
            <person name="Shao Y."/>
        </authorList>
    </citation>
    <scope>NUCLEOTIDE SEQUENCE [LARGE SCALE GENOMIC DNA]</scope>
    <source>
        <strain>K12 / MG1655 / ATCC 47076</strain>
    </source>
</reference>
<reference key="2">
    <citation type="journal article" date="2006" name="Mol. Syst. Biol.">
        <title>Highly accurate genome sequences of Escherichia coli K-12 strains MG1655 and W3110.</title>
        <authorList>
            <person name="Hayashi K."/>
            <person name="Morooka N."/>
            <person name="Yamamoto Y."/>
            <person name="Fujita K."/>
            <person name="Isono K."/>
            <person name="Choi S."/>
            <person name="Ohtsubo E."/>
            <person name="Baba T."/>
            <person name="Wanner B.L."/>
            <person name="Mori H."/>
            <person name="Horiuchi T."/>
        </authorList>
    </citation>
    <scope>NUCLEOTIDE SEQUENCE [LARGE SCALE GENOMIC DNA]</scope>
    <source>
        <strain>K12 / W3110 / ATCC 27325 / DSM 5911</strain>
    </source>
</reference>
<reference key="3">
    <citation type="journal article" date="2005" name="J. Bacteriol.">
        <title>Interaction network among Escherichia coli membrane proteins involved in cell division as revealed by bacterial two-hybrid analysis.</title>
        <authorList>
            <person name="Karimova G."/>
            <person name="Dautin N."/>
            <person name="Ladant D."/>
        </authorList>
    </citation>
    <scope>INTERACTION WITH FTSL; FTSQ; FTSI AND FTSN</scope>
    <source>
        <strain>K12</strain>
    </source>
</reference>
<reference key="4">
    <citation type="journal article" date="2009" name="J. Bacteriol.">
        <title>Characterization of YmgF, a 72-residue inner membrane protein that associates with the Escherichia coli cell division machinery.</title>
        <authorList>
            <person name="Karimova G."/>
            <person name="Robichon C."/>
            <person name="Ladant D."/>
        </authorList>
    </citation>
    <scope>FUNCTION</scope>
    <scope>SUBUNIT</scope>
    <scope>SUBCELLULAR LOCATION</scope>
    <scope>TOPOLOGY</scope>
    <source>
        <strain>K12 / MG1655 / ATCC 47076</strain>
    </source>
</reference>
<evidence type="ECO:0000255" key="1"/>
<evidence type="ECO:0000269" key="2">
    <source>
    </source>
</evidence>
<evidence type="ECO:0000269" key="3">
    <source>
    </source>
</evidence>
<organism>
    <name type="scientific">Escherichia coli (strain K12)</name>
    <dbReference type="NCBI Taxonomy" id="83333"/>
    <lineage>
        <taxon>Bacteria</taxon>
        <taxon>Pseudomonadati</taxon>
        <taxon>Pseudomonadota</taxon>
        <taxon>Gammaproteobacteria</taxon>
        <taxon>Enterobacterales</taxon>
        <taxon>Enterobacteriaceae</taxon>
        <taxon>Escherichia</taxon>
    </lineage>
</organism>
<comment type="function">
    <text evidence="3">Could be involved in cell division. May participate in the stabilization of the cell divisome under specific conditions.</text>
</comment>
<comment type="subunit">
    <text evidence="2 3">Interacts with FtsL, FtsQ, FtsI, FtsN, and probably many other cell division proteins.</text>
</comment>
<comment type="interaction">
    <interactant intactId="EBI-1214577">
        <id>P58034</id>
    </interactant>
    <interactant intactId="EBI-548564">
        <id>P0AD68</id>
        <label>ftsI</label>
    </interactant>
    <organismsDiffer>false</organismsDiffer>
    <experiments>3</experiments>
</comment>
<comment type="interaction">
    <interactant intactId="EBI-1214577">
        <id>P58034</id>
    </interactant>
    <interactant intactId="EBI-1119082">
        <id>P0AEN4</id>
        <label>ftsL</label>
    </interactant>
    <organismsDiffer>false</organismsDiffer>
    <experiments>3</experiments>
</comment>
<comment type="interaction">
    <interactant intactId="EBI-1214577">
        <id>P58034</id>
    </interactant>
    <interactant intactId="EBI-1130157">
        <id>P06136</id>
        <label>ftsQ</label>
    </interactant>
    <organismsDiffer>false</organismsDiffer>
    <experiments>3</experiments>
</comment>
<comment type="subcellular location">
    <subcellularLocation>
        <location evidence="3">Cell inner membrane</location>
        <topology evidence="3">Multi-pass membrane protein</topology>
    </subcellularLocation>
    <text>Localizes to the division septum. Localization requires FtsZ, FtsA, FTsQ and FtsN.</text>
</comment>
<protein>
    <recommendedName>
        <fullName>Inner membrane protein YmgF</fullName>
    </recommendedName>
</protein>
<accession>P58034</accession>
<accession>Q2EER3</accession>
<accession>Q2MBG8</accession>
<sequence>MNNSNNLDYFTLYIIFSIAFMLITLLVILIAKPSTGLGEVLVTINLLNALVWLAINLVNRLRERLVNHRDQQ</sequence>
<feature type="chain" id="PRO_0000168865" description="Inner membrane protein YmgF">
    <location>
        <begin position="1"/>
        <end position="72"/>
    </location>
</feature>
<feature type="topological domain" description="Cytoplasmic" evidence="1">
    <location>
        <begin position="1"/>
        <end position="9"/>
    </location>
</feature>
<feature type="transmembrane region" description="Helical" evidence="1">
    <location>
        <begin position="10"/>
        <end position="30"/>
    </location>
</feature>
<feature type="topological domain" description="Periplasmic" evidence="1">
    <location>
        <begin position="31"/>
        <end position="34"/>
    </location>
</feature>
<feature type="transmembrane region" description="Helical" evidence="1">
    <location>
        <begin position="35"/>
        <end position="55"/>
    </location>
</feature>
<feature type="topological domain" description="Cytoplasmic" evidence="1">
    <location>
        <begin position="56"/>
        <end position="72"/>
    </location>
</feature>